<sequence length="379" mass="42965">MKKAFISVGEISGDNYASQLVKALPDFMWVGITGPKMREAGVETVEKLENISVVGLMEALPKYFKIKETFKRSVEILDKGIDLLVVVDFPGFNLKLLKEAKKRGIKTVYFIAPQVWAWGKGRIPKIAQYTDLLIAIWPFEKEIYTDYISDSFRVEYVGHPILDIIKTEETEESFKEKIGIEKDKKIFGLLPGSRESEVKTLLPILLSSAEIIYRKREDLHFVIPSTPNMEENVKQIAGSKKVPLSVITVKDFRHPSYEVMKHSVFLNVASGTATLETAIFGNPFLLVYKVSPVTFFIGKMLVSIDYLGLPNIIAGREIIKELLQKECNPESIARWSLRYLEDPEVYERTKNDLEKVKKALGEKGAIKRSADLIKELSLS</sequence>
<name>LPXB_PERMH</name>
<reference key="1">
    <citation type="journal article" date="2009" name="J. Bacteriol.">
        <title>Complete and draft genome sequences of six members of the Aquificales.</title>
        <authorList>
            <person name="Reysenbach A.-L."/>
            <person name="Hamamura N."/>
            <person name="Podar M."/>
            <person name="Griffiths E."/>
            <person name="Ferreira S."/>
            <person name="Hochstein R."/>
            <person name="Heidelberg J."/>
            <person name="Johnson J."/>
            <person name="Mead D."/>
            <person name="Pohorille A."/>
            <person name="Sarmiento M."/>
            <person name="Schweighofer K."/>
            <person name="Seshadri R."/>
            <person name="Voytek M.A."/>
        </authorList>
    </citation>
    <scope>NUCLEOTIDE SEQUENCE [LARGE SCALE GENOMIC DNA]</scope>
    <source>
        <strain>DSM 14350 / EX-H1</strain>
    </source>
</reference>
<proteinExistence type="inferred from homology"/>
<gene>
    <name evidence="1" type="primary">lpxB</name>
    <name type="ordered locus">PERMA_1354</name>
</gene>
<organism>
    <name type="scientific">Persephonella marina (strain DSM 14350 / EX-H1)</name>
    <dbReference type="NCBI Taxonomy" id="123214"/>
    <lineage>
        <taxon>Bacteria</taxon>
        <taxon>Pseudomonadati</taxon>
        <taxon>Aquificota</taxon>
        <taxon>Aquificia</taxon>
        <taxon>Aquificales</taxon>
        <taxon>Hydrogenothermaceae</taxon>
        <taxon>Persephonella</taxon>
    </lineage>
</organism>
<protein>
    <recommendedName>
        <fullName evidence="1">Lipid-A-disaccharide synthase</fullName>
        <ecNumber evidence="1">2.4.1.182</ecNumber>
    </recommendedName>
</protein>
<evidence type="ECO:0000255" key="1">
    <source>
        <dbReference type="HAMAP-Rule" id="MF_00392"/>
    </source>
</evidence>
<comment type="function">
    <text evidence="1">Condensation of UDP-2,3-diacylglucosamine and 2,3-diacylglucosamine-1-phosphate to form lipid A disaccharide, a precursor of lipid A, a phosphorylated glycolipid that anchors the lipopolysaccharide to the outer membrane of the cell.</text>
</comment>
<comment type="catalytic activity">
    <reaction evidence="1">
        <text>a lipid X + a UDP-2-N,3-O-bis[(3R)-3-hydroxyacyl]-alpha-D-glucosamine = a lipid A disaccharide + UDP + H(+)</text>
        <dbReference type="Rhea" id="RHEA:67828"/>
        <dbReference type="ChEBI" id="CHEBI:15378"/>
        <dbReference type="ChEBI" id="CHEBI:58223"/>
        <dbReference type="ChEBI" id="CHEBI:137748"/>
        <dbReference type="ChEBI" id="CHEBI:176338"/>
        <dbReference type="ChEBI" id="CHEBI:176343"/>
        <dbReference type="EC" id="2.4.1.182"/>
    </reaction>
</comment>
<comment type="pathway">
    <text evidence="1">Bacterial outer membrane biogenesis; LPS lipid A biosynthesis.</text>
</comment>
<comment type="similarity">
    <text evidence="1">Belongs to the LpxB family.</text>
</comment>
<dbReference type="EC" id="2.4.1.182" evidence="1"/>
<dbReference type="EMBL" id="CP001230">
    <property type="protein sequence ID" value="ACO03161.1"/>
    <property type="molecule type" value="Genomic_DNA"/>
</dbReference>
<dbReference type="RefSeq" id="WP_012675400.1">
    <property type="nucleotide sequence ID" value="NC_012440.1"/>
</dbReference>
<dbReference type="SMR" id="C0QR27"/>
<dbReference type="STRING" id="123214.PERMA_1354"/>
<dbReference type="CAZy" id="GT19">
    <property type="family name" value="Glycosyltransferase Family 19"/>
</dbReference>
<dbReference type="PaxDb" id="123214-PERMA_1354"/>
<dbReference type="KEGG" id="pmx:PERMA_1354"/>
<dbReference type="eggNOG" id="COG0763">
    <property type="taxonomic scope" value="Bacteria"/>
</dbReference>
<dbReference type="HOGENOM" id="CLU_036577_3_1_0"/>
<dbReference type="OrthoDB" id="9801642at2"/>
<dbReference type="UniPathway" id="UPA00973"/>
<dbReference type="Proteomes" id="UP000001366">
    <property type="component" value="Chromosome"/>
</dbReference>
<dbReference type="GO" id="GO:0016020">
    <property type="term" value="C:membrane"/>
    <property type="evidence" value="ECO:0007669"/>
    <property type="project" value="GOC"/>
</dbReference>
<dbReference type="GO" id="GO:0008915">
    <property type="term" value="F:lipid-A-disaccharide synthase activity"/>
    <property type="evidence" value="ECO:0007669"/>
    <property type="project" value="UniProtKB-UniRule"/>
</dbReference>
<dbReference type="GO" id="GO:0005543">
    <property type="term" value="F:phospholipid binding"/>
    <property type="evidence" value="ECO:0007669"/>
    <property type="project" value="TreeGrafter"/>
</dbReference>
<dbReference type="GO" id="GO:0009245">
    <property type="term" value="P:lipid A biosynthetic process"/>
    <property type="evidence" value="ECO:0007669"/>
    <property type="project" value="UniProtKB-UniRule"/>
</dbReference>
<dbReference type="HAMAP" id="MF_00392">
    <property type="entry name" value="LpxB"/>
    <property type="match status" value="1"/>
</dbReference>
<dbReference type="InterPro" id="IPR003835">
    <property type="entry name" value="Glyco_trans_19"/>
</dbReference>
<dbReference type="NCBIfam" id="TIGR00215">
    <property type="entry name" value="lpxB"/>
    <property type="match status" value="1"/>
</dbReference>
<dbReference type="PANTHER" id="PTHR30372">
    <property type="entry name" value="LIPID-A-DISACCHARIDE SYNTHASE"/>
    <property type="match status" value="1"/>
</dbReference>
<dbReference type="PANTHER" id="PTHR30372:SF4">
    <property type="entry name" value="LIPID-A-DISACCHARIDE SYNTHASE, MITOCHONDRIAL-RELATED"/>
    <property type="match status" value="1"/>
</dbReference>
<dbReference type="Pfam" id="PF02684">
    <property type="entry name" value="LpxB"/>
    <property type="match status" value="1"/>
</dbReference>
<dbReference type="SUPFAM" id="SSF53756">
    <property type="entry name" value="UDP-Glycosyltransferase/glycogen phosphorylase"/>
    <property type="match status" value="1"/>
</dbReference>
<accession>C0QR27</accession>
<keyword id="KW-0328">Glycosyltransferase</keyword>
<keyword id="KW-0441">Lipid A biosynthesis</keyword>
<keyword id="KW-0444">Lipid biosynthesis</keyword>
<keyword id="KW-0443">Lipid metabolism</keyword>
<keyword id="KW-1185">Reference proteome</keyword>
<keyword id="KW-0808">Transferase</keyword>
<feature type="chain" id="PRO_1000191488" description="Lipid-A-disaccharide synthase">
    <location>
        <begin position="1"/>
        <end position="379"/>
    </location>
</feature>